<proteinExistence type="evidence at protein level"/>
<gene>
    <name type="primary">ydcJ</name>
    <name type="ordered locus">b1423</name>
    <name type="ordered locus">JW1419</name>
</gene>
<sequence>MANSITADEIREQFSQAMSAMYQQEVPQYGTLLELVADVNLAVLENNPQLHEKMVNADELARLNVERHGAIRVGTAQELATLRRMFAIMGMYPVSYYDLSQAGVPVHSTAFRPIDDASLARNPFRVFTSLLRLELIENEILRQKAAEILRQRDIFTPRCRQLLEEYEQQGGFNETQAQEFVQEALETFRWHQSATVDEETYRALHNEHRLIADVVCFPGCHINHLTPRTLDIDRVQSMMPECGIEPKILIEGPPRREVPILLRQTSFKALEETVLFAGQKQGTHTARFGEIEQRGVALTPKGRQLYDDLLRNAGTGQDNLTHQMHLQETFRTFPDSEFLMRQQGLAWFRYRLTPSGEAHRQAIHPGDDPQPLIERGWVVAQPITYEDFLPVSAAGIFQSNLGNETQTRSHGNASREAFEQALGCPVLDEFQLYQEAEERSKRRCGLL</sequence>
<protein>
    <recommendedName>
        <fullName evidence="4">2-oxoadipate dioxygenase/decarboxylase</fullName>
        <ecNumber evidence="2">1.13.11.93</ecNumber>
    </recommendedName>
    <alternativeName>
        <fullName evidence="3">2-hydroxyglutarate synthase</fullName>
    </alternativeName>
</protein>
<evidence type="ECO:0000250" key="1">
    <source>
        <dbReference type="UniProtKB" id="Q88CC1"/>
    </source>
</evidence>
<evidence type="ECO:0000269" key="2">
    <source>
    </source>
</evidence>
<evidence type="ECO:0000303" key="3">
    <source>
    </source>
</evidence>
<evidence type="ECO:0000305" key="4"/>
<reference key="1">
    <citation type="journal article" date="1997" name="Science">
        <title>The complete genome sequence of Escherichia coli K-12.</title>
        <authorList>
            <person name="Blattner F.R."/>
            <person name="Plunkett G. III"/>
            <person name="Bloch C.A."/>
            <person name="Perna N.T."/>
            <person name="Burland V."/>
            <person name="Riley M."/>
            <person name="Collado-Vides J."/>
            <person name="Glasner J.D."/>
            <person name="Rode C.K."/>
            <person name="Mayhew G.F."/>
            <person name="Gregor J."/>
            <person name="Davis N.W."/>
            <person name="Kirkpatrick H.A."/>
            <person name="Goeden M.A."/>
            <person name="Rose D.J."/>
            <person name="Mau B."/>
            <person name="Shao Y."/>
        </authorList>
    </citation>
    <scope>NUCLEOTIDE SEQUENCE [LARGE SCALE GENOMIC DNA]</scope>
    <source>
        <strain>K12 / MG1655 / ATCC 47076</strain>
    </source>
</reference>
<reference key="2">
    <citation type="journal article" date="2006" name="Mol. Syst. Biol.">
        <title>Highly accurate genome sequences of Escherichia coli K-12 strains MG1655 and W3110.</title>
        <authorList>
            <person name="Hayashi K."/>
            <person name="Morooka N."/>
            <person name="Yamamoto Y."/>
            <person name="Fujita K."/>
            <person name="Isono K."/>
            <person name="Choi S."/>
            <person name="Ohtsubo E."/>
            <person name="Baba T."/>
            <person name="Wanner B.L."/>
            <person name="Mori H."/>
            <person name="Horiuchi T."/>
        </authorList>
    </citation>
    <scope>NUCLEOTIDE SEQUENCE [LARGE SCALE GENOMIC DNA]</scope>
    <source>
        <strain>K12 / W3110 / ATCC 27325 / DSM 5911</strain>
    </source>
</reference>
<reference key="3">
    <citation type="journal article" date="2020" name="Nat. Commun.">
        <title>An iron (II) dependent oxygenase performs the last missing step of plant lysine catabolism.</title>
        <authorList>
            <person name="Thompson M.G."/>
            <person name="Blake-Hedges J.M."/>
            <person name="Pereira J.H."/>
            <person name="Hangasky J.A."/>
            <person name="Belcher M.S."/>
            <person name="Moore W.M."/>
            <person name="Barajas J.F."/>
            <person name="Cruz-Morales P."/>
            <person name="Washington L.J."/>
            <person name="Haushalter R.W."/>
            <person name="Eiben C.B."/>
            <person name="Liu Y."/>
            <person name="Skyrud W."/>
            <person name="Benites V.T."/>
            <person name="Barnum T.P."/>
            <person name="Baidoo E.E.K."/>
            <person name="Scheller H.V."/>
            <person name="Marletta M.A."/>
            <person name="Shih P.M."/>
            <person name="Adams P.D."/>
            <person name="Keasling J.D."/>
        </authorList>
    </citation>
    <scope>FUNCTION</scope>
    <scope>CATALYTIC ACTIVITY</scope>
</reference>
<dbReference type="EC" id="1.13.11.93" evidence="2"/>
<dbReference type="EMBL" id="U00096">
    <property type="protein sequence ID" value="AAC74505.1"/>
    <property type="molecule type" value="Genomic_DNA"/>
</dbReference>
<dbReference type="EMBL" id="AP009048">
    <property type="protein sequence ID" value="BAE76434.1"/>
    <property type="molecule type" value="Genomic_DNA"/>
</dbReference>
<dbReference type="PIR" id="B64894">
    <property type="entry name" value="B64894"/>
</dbReference>
<dbReference type="RefSeq" id="NP_415940.1">
    <property type="nucleotide sequence ID" value="NC_000913.3"/>
</dbReference>
<dbReference type="RefSeq" id="WP_000013789.1">
    <property type="nucleotide sequence ID" value="NZ_SSZK01000021.1"/>
</dbReference>
<dbReference type="SMR" id="P76097"/>
<dbReference type="BioGRID" id="4262008">
    <property type="interactions" value="10"/>
</dbReference>
<dbReference type="BioGRID" id="850353">
    <property type="interactions" value="3"/>
</dbReference>
<dbReference type="DIP" id="DIP-11646N"/>
<dbReference type="FunCoup" id="P76097">
    <property type="interactions" value="58"/>
</dbReference>
<dbReference type="IntAct" id="P76097">
    <property type="interactions" value="10"/>
</dbReference>
<dbReference type="STRING" id="511145.b1423"/>
<dbReference type="jPOST" id="P76097"/>
<dbReference type="PaxDb" id="511145-b1423"/>
<dbReference type="EnsemblBacteria" id="AAC74505">
    <property type="protein sequence ID" value="AAC74505"/>
    <property type="gene ID" value="b1423"/>
</dbReference>
<dbReference type="GeneID" id="945991"/>
<dbReference type="KEGG" id="ecj:JW1419"/>
<dbReference type="KEGG" id="eco:b1423"/>
<dbReference type="KEGG" id="ecoc:C3026_08285"/>
<dbReference type="PATRIC" id="fig|1411691.4.peg.847"/>
<dbReference type="EchoBASE" id="EB3516"/>
<dbReference type="eggNOG" id="COG5383">
    <property type="taxonomic scope" value="Bacteria"/>
</dbReference>
<dbReference type="HOGENOM" id="CLU_026640_0_0_6"/>
<dbReference type="InParanoid" id="P76097"/>
<dbReference type="OMA" id="MYRAEVP"/>
<dbReference type="OrthoDB" id="4394119at2"/>
<dbReference type="PhylomeDB" id="P76097"/>
<dbReference type="BioCyc" id="EcoCyc:G6738-MONOMER"/>
<dbReference type="PRO" id="PR:P76097"/>
<dbReference type="Proteomes" id="UP000000625">
    <property type="component" value="Chromosome"/>
</dbReference>
<dbReference type="GO" id="GO:0051213">
    <property type="term" value="F:dioxygenase activity"/>
    <property type="evidence" value="ECO:0007669"/>
    <property type="project" value="UniProtKB-KW"/>
</dbReference>
<dbReference type="GO" id="GO:0046872">
    <property type="term" value="F:metal ion binding"/>
    <property type="evidence" value="ECO:0007669"/>
    <property type="project" value="UniProtKB-KW"/>
</dbReference>
<dbReference type="CDD" id="cd16348">
    <property type="entry name" value="VOC_YdcJ_like"/>
    <property type="match status" value="1"/>
</dbReference>
<dbReference type="Gene3D" id="3.10.180.80">
    <property type="entry name" value="Uncharacterised protein PF07063, DUF1338"/>
    <property type="match status" value="1"/>
</dbReference>
<dbReference type="InterPro" id="IPR009770">
    <property type="entry name" value="HGLS"/>
</dbReference>
<dbReference type="InterPro" id="IPR047869">
    <property type="entry name" value="YdcJ_bac-like"/>
</dbReference>
<dbReference type="PANTHER" id="PTHR39479">
    <property type="match status" value="1"/>
</dbReference>
<dbReference type="PANTHER" id="PTHR39479:SF2">
    <property type="entry name" value="2-OXOADIPATE DIOXYGENASE_DECARBOXYLASE"/>
    <property type="match status" value="1"/>
</dbReference>
<dbReference type="Pfam" id="PF07063">
    <property type="entry name" value="HGLS"/>
    <property type="match status" value="1"/>
</dbReference>
<dbReference type="SMART" id="SM01150">
    <property type="entry name" value="DUF1338"/>
    <property type="match status" value="1"/>
</dbReference>
<feature type="chain" id="PRO_0000168932" description="2-oxoadipate dioxygenase/decarboxylase">
    <location>
        <begin position="1"/>
        <end position="447"/>
    </location>
</feature>
<feature type="binding site" evidence="1">
    <location>
        <position position="68"/>
    </location>
    <ligand>
        <name>2-oxoadipate</name>
        <dbReference type="ChEBI" id="CHEBI:57499"/>
    </ligand>
</feature>
<feature type="binding site" evidence="1">
    <location>
        <position position="68"/>
    </location>
    <ligand>
        <name>Fe(2+)</name>
        <dbReference type="ChEBI" id="CHEBI:29033"/>
    </ligand>
</feature>
<feature type="binding site" evidence="1">
    <location>
        <position position="72"/>
    </location>
    <ligand>
        <name>2-oxoadipate</name>
        <dbReference type="ChEBI" id="CHEBI:57499"/>
    </ligand>
</feature>
<feature type="binding site" evidence="1">
    <location>
        <position position="224"/>
    </location>
    <ligand>
        <name>2-oxoadipate</name>
        <dbReference type="ChEBI" id="CHEBI:57499"/>
    </ligand>
</feature>
<feature type="binding site" evidence="1">
    <location>
        <position position="224"/>
    </location>
    <ligand>
        <name>Fe(2+)</name>
        <dbReference type="ChEBI" id="CHEBI:29033"/>
    </ligand>
</feature>
<feature type="binding site" evidence="1">
    <location>
        <position position="290"/>
    </location>
    <ligand>
        <name>Fe(2+)</name>
        <dbReference type="ChEBI" id="CHEBI:29033"/>
    </ligand>
</feature>
<feature type="binding site" evidence="1">
    <location>
        <position position="391"/>
    </location>
    <ligand>
        <name>2-oxoadipate</name>
        <dbReference type="ChEBI" id="CHEBI:57499"/>
    </ligand>
</feature>
<feature type="site" description="Important for substrate specificity" evidence="1">
    <location>
        <position position="72"/>
    </location>
</feature>
<name>HGLS_ECOLI</name>
<keyword id="KW-0223">Dioxygenase</keyword>
<keyword id="KW-0408">Iron</keyword>
<keyword id="KW-0479">Metal-binding</keyword>
<keyword id="KW-0560">Oxidoreductase</keyword>
<keyword id="KW-1185">Reference proteome</keyword>
<accession>P76097</accession>
<accession>Q2MBC2</accession>
<comment type="function">
    <text evidence="2">Catalyzes the decarboxylation and hydroxylation of 2-oxoadipate (2OA) to form D-2-hydroxyglutarate (D-2-HGA).</text>
</comment>
<comment type="catalytic activity">
    <reaction evidence="2">
        <text>2-oxoadipate + O2 = (R)-2-hydroxyglutarate + CO2</text>
        <dbReference type="Rhea" id="RHEA:71787"/>
        <dbReference type="ChEBI" id="CHEBI:15379"/>
        <dbReference type="ChEBI" id="CHEBI:15801"/>
        <dbReference type="ChEBI" id="CHEBI:16526"/>
        <dbReference type="ChEBI" id="CHEBI:57499"/>
        <dbReference type="EC" id="1.13.11.93"/>
    </reaction>
</comment>
<comment type="cofactor">
    <cofactor evidence="1">
        <name>Fe(2+)</name>
        <dbReference type="ChEBI" id="CHEBI:29033"/>
    </cofactor>
</comment>
<comment type="similarity">
    <text evidence="4">Belongs to the 2-oxoadipate dioxygenase/decarboxylase family.</text>
</comment>
<organism>
    <name type="scientific">Escherichia coli (strain K12)</name>
    <dbReference type="NCBI Taxonomy" id="83333"/>
    <lineage>
        <taxon>Bacteria</taxon>
        <taxon>Pseudomonadati</taxon>
        <taxon>Pseudomonadota</taxon>
        <taxon>Gammaproteobacteria</taxon>
        <taxon>Enterobacterales</taxon>
        <taxon>Enterobacteriaceae</taxon>
        <taxon>Escherichia</taxon>
    </lineage>
</organism>